<protein>
    <recommendedName>
        <fullName>Fucoxanthin-chlorophyll a-c binding protein, chloroplastic</fullName>
        <shortName>FCP</shortName>
    </recommendedName>
</protein>
<evidence type="ECO:0000255" key="1"/>
<evidence type="ECO:0000305" key="2"/>
<reference key="1">
    <citation type="journal article" date="1994" name="Plant Mol. Biol.">
        <title>Cloning and nucleotide sequence of a cDNA encoding a major fucoxanthin-chlorophyll a/c-containing protein from the chrysophyte Isochrysis galbana: implications for evolution of the cab gene family.</title>
        <authorList>
            <person name="Laroche J."/>
            <person name="Henry D."/>
            <person name="Wyman K."/>
            <person name="Sukenik A."/>
            <person name="Falkowski P."/>
        </authorList>
    </citation>
    <scope>NUCLEOTIDE SEQUENCE [MRNA]</scope>
    <scope>PARTIAL PROTEIN SEQUENCE</scope>
    <source>
        <strain>DUN</strain>
    </source>
</reference>
<dbReference type="EMBL" id="X77333">
    <property type="protein sequence ID" value="CAA54547.1"/>
    <property type="molecule type" value="mRNA"/>
</dbReference>
<dbReference type="PIR" id="S46301">
    <property type="entry name" value="S46301"/>
</dbReference>
<dbReference type="SMR" id="Q39709"/>
<dbReference type="GO" id="GO:0009535">
    <property type="term" value="C:chloroplast thylakoid membrane"/>
    <property type="evidence" value="ECO:0007669"/>
    <property type="project" value="UniProtKB-SubCell"/>
</dbReference>
<dbReference type="GO" id="GO:0030076">
    <property type="term" value="C:light-harvesting complex"/>
    <property type="evidence" value="ECO:0007669"/>
    <property type="project" value="UniProtKB-KW"/>
</dbReference>
<dbReference type="GO" id="GO:0009523">
    <property type="term" value="C:photosystem II"/>
    <property type="evidence" value="ECO:0007669"/>
    <property type="project" value="UniProtKB-KW"/>
</dbReference>
<dbReference type="GO" id="GO:0016168">
    <property type="term" value="F:chlorophyll binding"/>
    <property type="evidence" value="ECO:0007669"/>
    <property type="project" value="UniProtKB-KW"/>
</dbReference>
<dbReference type="GO" id="GO:0009765">
    <property type="term" value="P:photosynthesis, light harvesting"/>
    <property type="evidence" value="ECO:0007669"/>
    <property type="project" value="InterPro"/>
</dbReference>
<dbReference type="Gene3D" id="1.10.3460.10">
    <property type="entry name" value="Chlorophyll a/b binding protein domain"/>
    <property type="match status" value="1"/>
</dbReference>
<dbReference type="InterPro" id="IPR001344">
    <property type="entry name" value="Chloro_AB-bd_pln"/>
</dbReference>
<dbReference type="InterPro" id="IPR022796">
    <property type="entry name" value="Chloroa_b-bind"/>
</dbReference>
<dbReference type="PANTHER" id="PTHR21649">
    <property type="entry name" value="CHLOROPHYLL A/B BINDING PROTEIN"/>
    <property type="match status" value="1"/>
</dbReference>
<dbReference type="Pfam" id="PF00504">
    <property type="entry name" value="Chloroa_b-bind"/>
    <property type="match status" value="1"/>
</dbReference>
<dbReference type="SUPFAM" id="SSF103511">
    <property type="entry name" value="Chlorophyll a-b binding protein"/>
    <property type="match status" value="1"/>
</dbReference>
<name>FCP_ISOGA</name>
<organism>
    <name type="scientific">Isochrysis galbana</name>
    <name type="common">Marine planktonic alga</name>
    <dbReference type="NCBI Taxonomy" id="37099"/>
    <lineage>
        <taxon>Eukaryota</taxon>
        <taxon>Haptista</taxon>
        <taxon>Haptophyta</taxon>
        <taxon>Prymnesiophyceae</taxon>
        <taxon>Isochrysidales</taxon>
        <taxon>Isochrysidaceae</taxon>
        <taxon>Isochrysis</taxon>
    </lineage>
</organism>
<sequence length="208" mass="22472">MMTLASLPSTAIAGLASAAPKVQPRMAANDEFAYGLPGGANILGEFDPAGFLKGKDKLEVYRLREAETTHGRVAMLASLGFVVQEKFHPLFSGDNGPAIEQIPQLPYWLWIVMTIGIGRAELFRIQKGWAKVNPETGKADSALREGYEPGDLGFDPLGLAPSDPDEFRLMQEKELSHGRLAMIAAAGFLAQEAVSGDTWGTYWGDATF</sequence>
<comment type="function">
    <text>The light-harvesting complex (LHC) functions as a light receptor, it captures and delivers excitation energy to photosystems with which it is closely associated. Energy is transferred from the carotenoid and chlorophyll C (or B) to chlorophyll A and the photosynthetic reaction centers where it is used to synthesize ATP and reducing power.</text>
</comment>
<comment type="subunit">
    <text>The LHC complex of chromophytic algae is composed of fucoxanthin, chlorophyll A and C bound non-covalently by fucoxanthin chlorophyll proteins (FCPs). The ratio of pigments in this LHC is; fucoxanthin: chlorophyll C: chlorophyll A; (0.6-1): (0.1-0.3): (1).</text>
</comment>
<comment type="subcellular location">
    <subcellularLocation>
        <location>Plastid</location>
        <location>Chloroplast thylakoid membrane</location>
    </subcellularLocation>
    <text>FCPs are probably transported across the endoplasmic reticulum membranes that surround the plastid via a signal peptide, followed by translocation across the thylakoid membrane via a transit peptide.</text>
</comment>
<comment type="induction">
    <text>Expression is increased 5-fold under conditions of low light.</text>
</comment>
<comment type="similarity">
    <text evidence="2">Belongs to the fucoxanthin chlorophyll protein family.</text>
</comment>
<feature type="transit peptide" description="Chloroplast" evidence="2">
    <location>
        <begin position="1"/>
        <end position="31"/>
    </location>
</feature>
<feature type="chain" id="PRO_0000021245" description="Fucoxanthin-chlorophyll a-c binding protein, chloroplastic">
    <location>
        <begin position="32"/>
        <end position="208"/>
    </location>
</feature>
<feature type="transmembrane region" description="Helical" evidence="1">
    <location>
        <begin position="102"/>
        <end position="118"/>
    </location>
</feature>
<proteinExistence type="evidence at protein level"/>
<accession>Q39709</accession>
<gene>
    <name type="primary">FCP</name>
</gene>
<keyword id="KW-0148">Chlorophyll</keyword>
<keyword id="KW-0150">Chloroplast</keyword>
<keyword id="KW-0157">Chromophore</keyword>
<keyword id="KW-0903">Direct protein sequencing</keyword>
<keyword id="KW-0437">Light-harvesting polypeptide</keyword>
<keyword id="KW-0472">Membrane</keyword>
<keyword id="KW-0602">Photosynthesis</keyword>
<keyword id="KW-0604">Photosystem II</keyword>
<keyword id="KW-0934">Plastid</keyword>
<keyword id="KW-0793">Thylakoid</keyword>
<keyword id="KW-0809">Transit peptide</keyword>
<keyword id="KW-0812">Transmembrane</keyword>
<keyword id="KW-1133">Transmembrane helix</keyword>